<name>PSBT_CYAPA</name>
<organism>
    <name type="scientific">Cyanophora paradoxa</name>
    <dbReference type="NCBI Taxonomy" id="2762"/>
    <lineage>
        <taxon>Eukaryota</taxon>
        <taxon>Glaucocystophyceae</taxon>
        <taxon>Cyanophoraceae</taxon>
        <taxon>Cyanophora</taxon>
    </lineage>
</organism>
<proteinExistence type="inferred from homology"/>
<dbReference type="EMBL" id="U30821">
    <property type="protein sequence ID" value="AAA81197.1"/>
    <property type="molecule type" value="Genomic_DNA"/>
</dbReference>
<dbReference type="PIR" id="T06854">
    <property type="entry name" value="T06854"/>
</dbReference>
<dbReference type="RefSeq" id="NP_043166.1">
    <property type="nucleotide sequence ID" value="NC_001675.1"/>
</dbReference>
<dbReference type="SMR" id="P48109"/>
<dbReference type="GeneID" id="801549"/>
<dbReference type="GO" id="GO:0033115">
    <property type="term" value="C:cyanelle thylakoid membrane"/>
    <property type="evidence" value="ECO:0007669"/>
    <property type="project" value="UniProtKB-SubCell"/>
</dbReference>
<dbReference type="GO" id="GO:0009539">
    <property type="term" value="C:photosystem II reaction center"/>
    <property type="evidence" value="ECO:0007669"/>
    <property type="project" value="InterPro"/>
</dbReference>
<dbReference type="GO" id="GO:0015979">
    <property type="term" value="P:photosynthesis"/>
    <property type="evidence" value="ECO:0007669"/>
    <property type="project" value="UniProtKB-UniRule"/>
</dbReference>
<dbReference type="HAMAP" id="MF_00808">
    <property type="entry name" value="PSII_PsbT"/>
    <property type="match status" value="1"/>
</dbReference>
<dbReference type="InterPro" id="IPR001743">
    <property type="entry name" value="PSII_PsbT"/>
</dbReference>
<dbReference type="InterPro" id="IPR037268">
    <property type="entry name" value="PSII_PsbT_sf"/>
</dbReference>
<dbReference type="PANTHER" id="PTHR36411">
    <property type="match status" value="1"/>
</dbReference>
<dbReference type="PANTHER" id="PTHR36411:SF2">
    <property type="entry name" value="PHOTOSYSTEM II REACTION CENTER PROTEIN T"/>
    <property type="match status" value="1"/>
</dbReference>
<dbReference type="Pfam" id="PF01405">
    <property type="entry name" value="PsbT"/>
    <property type="match status" value="1"/>
</dbReference>
<dbReference type="SUPFAM" id="SSF161029">
    <property type="entry name" value="Photosystem II reaction center protein T, PsbT"/>
    <property type="match status" value="1"/>
</dbReference>
<geneLocation type="cyanelle"/>
<feature type="chain" id="PRO_0000217925" description="Photosystem II reaction center protein T">
    <location>
        <begin position="1"/>
        <end position="31"/>
    </location>
</feature>
<feature type="transmembrane region" description="Helical" evidence="1">
    <location>
        <begin position="3"/>
        <end position="23"/>
    </location>
</feature>
<reference key="1">
    <citation type="journal article" date="1995" name="Plant Mol. Biol. Rep.">
        <title>Nucleotide sequence of the cyanelle DNA from Cyanophora paradoxa.</title>
        <authorList>
            <person name="Stirewalt V.L."/>
            <person name="Michalowski C.B."/>
            <person name="Loeffelhardt W."/>
            <person name="Bohnert H.J."/>
            <person name="Bryant D.A."/>
        </authorList>
    </citation>
    <scope>NUCLEOTIDE SEQUENCE [LARGE SCALE GENOMIC DNA]</scope>
    <source>
        <strain>UTEX LB 555 / Pringsheim</strain>
    </source>
</reference>
<reference key="2">
    <citation type="book" date="1997" name="Eukaryotism and symbiosis">
        <title>The complete sequence of the cyanelle genome of Cyanophora paradoxa: the genetic complexity of a primitive plastid.</title>
        <editorList>
            <person name="Schenk H.E.A."/>
            <person name="Herrmann R."/>
            <person name="Jeon K.W."/>
            <person name="Mueller N.E."/>
            <person name="Schwemmler W."/>
        </editorList>
        <authorList>
            <person name="Loeffelhardt W."/>
            <person name="Stirewalt V.L."/>
            <person name="Michalowski C.B."/>
            <person name="Annarella M."/>
            <person name="Farley J.Y."/>
            <person name="Schluchter W.M."/>
            <person name="Chung S."/>
            <person name="Newmann-Spallart C."/>
            <person name="Steiner J.M."/>
            <person name="Jakowitsch J."/>
            <person name="Bohnert H.J."/>
            <person name="Bryant D.A."/>
        </authorList>
    </citation>
    <scope>NUCLEOTIDE SEQUENCE [LARGE SCALE GENOMIC DNA]</scope>
    <source>
        <strain>UTEX LB 555 / Pringsheim</strain>
    </source>
</reference>
<comment type="function">
    <text evidence="1">Found at the monomer-monomer interface of the photosystem II (PS II) dimer, plays a role in assembly and dimerization of PSII. PSII is a light-driven water plastoquinone oxidoreductase, using light energy to abstract electrons from H(2)O, generating a proton gradient subsequently used for ATP formation.</text>
</comment>
<comment type="subunit">
    <text evidence="1">PSII is composed of 1 copy each of membrane proteins PsbA, PsbB, PsbC, PsbD, PsbE, PsbF, PsbH, PsbI, PsbJ, PsbK, PsbL, PsbM, PsbT, PsbX, PsbY, PsbZ, Psb30/Ycf12, at least 3 peripheral proteins of the oxygen-evolving complex and a large number of cofactors. It forms dimeric complexes.</text>
</comment>
<comment type="subcellular location">
    <subcellularLocation>
        <location evidence="1">Plastid</location>
        <location evidence="1">Cyanelle thylakoid membrane</location>
        <topology evidence="1">Single-pass membrane protein</topology>
    </subcellularLocation>
</comment>
<comment type="similarity">
    <text evidence="1">Belongs to the PsbT family.</text>
</comment>
<protein>
    <recommendedName>
        <fullName evidence="1">Photosystem II reaction center protein T</fullName>
        <shortName evidence="1">PSII-T</shortName>
    </recommendedName>
</protein>
<sequence length="31" mass="3629">MEALVYTFLLVTTLGILFFSIIFRDPPRINQ</sequence>
<evidence type="ECO:0000255" key="1">
    <source>
        <dbReference type="HAMAP-Rule" id="MF_00808"/>
    </source>
</evidence>
<gene>
    <name evidence="1" type="primary">psbT</name>
</gene>
<keyword id="KW-0194">Cyanelle</keyword>
<keyword id="KW-0472">Membrane</keyword>
<keyword id="KW-0602">Photosynthesis</keyword>
<keyword id="KW-0604">Photosystem II</keyword>
<keyword id="KW-0934">Plastid</keyword>
<keyword id="KW-0793">Thylakoid</keyword>
<keyword id="KW-0812">Transmembrane</keyword>
<keyword id="KW-1133">Transmembrane helix</keyword>
<accession>P48109</accession>